<name>Y827_ENCCU</name>
<gene>
    <name type="ordered locus">ECU08_0270</name>
</gene>
<protein>
    <recommendedName>
        <fullName>Uncharacterized protein ECU08_0270</fullName>
    </recommendedName>
</protein>
<dbReference type="EMBL" id="AL590448">
    <property type="protein sequence ID" value="CAD26332.1"/>
    <property type="molecule type" value="Genomic_DNA"/>
</dbReference>
<dbReference type="RefSeq" id="NP_597156.1">
    <property type="nucleotide sequence ID" value="NM_001041765.1"/>
</dbReference>
<dbReference type="SMR" id="Q8SUT4"/>
<dbReference type="GeneID" id="859578"/>
<dbReference type="KEGG" id="ecu:ECU08_0270"/>
<dbReference type="VEuPathDB" id="MicrosporidiaDB:ECU08_0270"/>
<dbReference type="HOGENOM" id="CLU_702136_0_0_1"/>
<dbReference type="InParanoid" id="Q8SUT4"/>
<dbReference type="OrthoDB" id="2188448at2759"/>
<dbReference type="Proteomes" id="UP000000819">
    <property type="component" value="Chromosome VIII"/>
</dbReference>
<dbReference type="Gene3D" id="1.25.40.180">
    <property type="match status" value="1"/>
</dbReference>
<dbReference type="InterPro" id="IPR016024">
    <property type="entry name" value="ARM-type_fold"/>
</dbReference>
<dbReference type="SUPFAM" id="SSF48371">
    <property type="entry name" value="ARM repeat"/>
    <property type="match status" value="1"/>
</dbReference>
<accession>Q8SUT4</accession>
<sequence length="392" mass="45077">MQLPIPRINSTNYQRILMETKQSGDREKTIEDIKNVILLMPHKSPIVTNFISDLARDDAALKDRMVRTINEILETGDIHGLISASFTLRRLGVGGTENLWWVGKIPVVNPLFDGIDLAIPSDSLDKCREEAERMLETVDEESFEEVFCVVQIIKGFRFSVPECLSQLGPISRHKSLVDGIRILHREENSLYLCVLVLELAKKQGFLKILLEDLDSFDHEFRDLLLSLLFECFHSPGEENSVYISSSYTPLRTPEDLELFKHLTTENTARIMKRISGRGKVEKFFHEEEAAAGKEVLRISREEFEKTDFGDKKMFFRNFCLLGSPSISHFLTYLEIYKEHFVLDKEDQKAFLSIFFEVFGGFESFCRIVVGKMVQFKIIDPELVTDFDGNQAL</sequence>
<organism>
    <name type="scientific">Encephalitozoon cuniculi (strain GB-M1)</name>
    <name type="common">Microsporidian parasite</name>
    <dbReference type="NCBI Taxonomy" id="284813"/>
    <lineage>
        <taxon>Eukaryota</taxon>
        <taxon>Fungi</taxon>
        <taxon>Fungi incertae sedis</taxon>
        <taxon>Microsporidia</taxon>
        <taxon>Unikaryonidae</taxon>
        <taxon>Encephalitozoon</taxon>
    </lineage>
</organism>
<comment type="developmental stage">
    <text evidence="1">Expressed in late sporogonial stages.</text>
</comment>
<evidence type="ECO:0000269" key="1">
    <source>
    </source>
</evidence>
<proteinExistence type="evidence at protein level"/>
<keyword id="KW-1185">Reference proteome</keyword>
<feature type="chain" id="PRO_0000383040" description="Uncharacterized protein ECU08_0270">
    <location>
        <begin position="1"/>
        <end position="392"/>
    </location>
</feature>
<reference key="1">
    <citation type="journal article" date="2001" name="Nature">
        <title>Genome sequence and gene compaction of the eukaryote parasite Encephalitozoon cuniculi.</title>
        <authorList>
            <person name="Katinka M.D."/>
            <person name="Duprat S."/>
            <person name="Cornillot E."/>
            <person name="Metenier G."/>
            <person name="Thomarat F."/>
            <person name="Prensier G."/>
            <person name="Barbe V."/>
            <person name="Peyretaillade E."/>
            <person name="Brottier P."/>
            <person name="Wincker P."/>
            <person name="Delbac F."/>
            <person name="El Alaoui H."/>
            <person name="Peyret P."/>
            <person name="Saurin W."/>
            <person name="Gouy M."/>
            <person name="Weissenbach J."/>
            <person name="Vivares C.P."/>
        </authorList>
    </citation>
    <scope>NUCLEOTIDE SEQUENCE [LARGE SCALE GENOMIC DNA]</scope>
    <source>
        <strain>GB-M1</strain>
    </source>
</reference>
<reference key="2">
    <citation type="journal article" date="2006" name="Proteomics">
        <title>Proteomic analysis of the eukaryotic parasite Encephalitozoon cuniculi (microsporidia): a reference map for proteins expressed in late sporogonial stages.</title>
        <authorList>
            <person name="Brosson D."/>
            <person name="Kuhn L."/>
            <person name="Delbac F."/>
            <person name="Garin J."/>
            <person name="Vivares C.P."/>
            <person name="Texier C."/>
        </authorList>
    </citation>
    <scope>IDENTIFICATION BY MASS SPECTROMETRY [LARGE SCALE ANALYSIS]</scope>
    <scope>DEVELOPMENTAL STAGE</scope>
    <scope>SUBCELLULAR LOCATION</scope>
</reference>